<comment type="subcellular location">
    <subcellularLocation>
        <location>Cytoplasm</location>
    </subcellularLocation>
</comment>
<comment type="similarity">
    <text evidence="1">Belongs to the universal ribosomal protein uS9 family.</text>
</comment>
<dbReference type="EMBL" id="AF031546">
    <property type="protein sequence ID" value="AAB86856.1"/>
    <property type="molecule type" value="mRNA"/>
</dbReference>
<dbReference type="SMR" id="O22647"/>
<dbReference type="GO" id="GO:0022627">
    <property type="term" value="C:cytosolic small ribosomal subunit"/>
    <property type="evidence" value="ECO:0007669"/>
    <property type="project" value="TreeGrafter"/>
</dbReference>
<dbReference type="GO" id="GO:0003723">
    <property type="term" value="F:RNA binding"/>
    <property type="evidence" value="ECO:0007669"/>
    <property type="project" value="TreeGrafter"/>
</dbReference>
<dbReference type="GO" id="GO:0003735">
    <property type="term" value="F:structural constituent of ribosome"/>
    <property type="evidence" value="ECO:0007669"/>
    <property type="project" value="InterPro"/>
</dbReference>
<dbReference type="GO" id="GO:0000462">
    <property type="term" value="P:maturation of SSU-rRNA from tricistronic rRNA transcript (SSU-rRNA, 5.8S rRNA, LSU-rRNA)"/>
    <property type="evidence" value="ECO:0007669"/>
    <property type="project" value="TreeGrafter"/>
</dbReference>
<dbReference type="GO" id="GO:0006412">
    <property type="term" value="P:translation"/>
    <property type="evidence" value="ECO:0007669"/>
    <property type="project" value="InterPro"/>
</dbReference>
<dbReference type="FunFam" id="3.30.230.10:FF:000007">
    <property type="entry name" value="40S ribosomal protein S16"/>
    <property type="match status" value="1"/>
</dbReference>
<dbReference type="Gene3D" id="3.30.230.10">
    <property type="match status" value="1"/>
</dbReference>
<dbReference type="InterPro" id="IPR020568">
    <property type="entry name" value="Ribosomal_Su5_D2-typ_SF"/>
</dbReference>
<dbReference type="InterPro" id="IPR000754">
    <property type="entry name" value="Ribosomal_uS9"/>
</dbReference>
<dbReference type="InterPro" id="IPR020574">
    <property type="entry name" value="Ribosomal_uS9_CS"/>
</dbReference>
<dbReference type="InterPro" id="IPR014721">
    <property type="entry name" value="Ribsml_uS5_D2-typ_fold_subgr"/>
</dbReference>
<dbReference type="PANTHER" id="PTHR21569:SF16">
    <property type="entry name" value="RIBOSOMAL PROTEIN S16"/>
    <property type="match status" value="1"/>
</dbReference>
<dbReference type="PANTHER" id="PTHR21569">
    <property type="entry name" value="RIBOSOMAL PROTEIN S9"/>
    <property type="match status" value="1"/>
</dbReference>
<dbReference type="Pfam" id="PF00380">
    <property type="entry name" value="Ribosomal_S9"/>
    <property type="match status" value="1"/>
</dbReference>
<dbReference type="SUPFAM" id="SSF54211">
    <property type="entry name" value="Ribosomal protein S5 domain 2-like"/>
    <property type="match status" value="1"/>
</dbReference>
<dbReference type="PROSITE" id="PS00360">
    <property type="entry name" value="RIBOSOMAL_S9"/>
    <property type="match status" value="1"/>
</dbReference>
<keyword id="KW-0963">Cytoplasm</keyword>
<keyword id="KW-0687">Ribonucleoprotein</keyword>
<keyword id="KW-0689">Ribosomal protein</keyword>
<accession>O22647</accession>
<sequence length="145" mass="16559">MATPATESVQCFGRKKTAVAVTHCKRGRGLIKVNGSPIELVKPEILRYKAFEPILLLGRHRFVGVDMRIRVRGGGKTSQIYAIRQSIAKALVAYYQKYVDEQAKKEVKDILMRYDRTLLVADPRRCEPKKFGGRGARSRFQKSYR</sequence>
<proteinExistence type="evidence at transcript level"/>
<reference key="1">
    <citation type="submission" date="1997-10" db="EMBL/GenBank/DDBJ databases">
        <authorList>
            <person name="Panico E."/>
            <person name="Baysdorfer C."/>
        </authorList>
    </citation>
    <scope>NUCLEOTIDE SEQUENCE [MRNA]</scope>
</reference>
<protein>
    <recommendedName>
        <fullName evidence="1">Small ribosomal subunit protein uS9</fullName>
    </recommendedName>
    <alternativeName>
        <fullName>40S ribosomal protein S16</fullName>
    </alternativeName>
</protein>
<gene>
    <name type="primary">RPS16</name>
</gene>
<evidence type="ECO:0000305" key="1"/>
<organism>
    <name type="scientific">Fritillaria agrestis</name>
    <name type="common">Stinkbells</name>
    <dbReference type="NCBI Taxonomy" id="64177"/>
    <lineage>
        <taxon>Eukaryota</taxon>
        <taxon>Viridiplantae</taxon>
        <taxon>Streptophyta</taxon>
        <taxon>Embryophyta</taxon>
        <taxon>Tracheophyta</taxon>
        <taxon>Spermatophyta</taxon>
        <taxon>Magnoliopsida</taxon>
        <taxon>Liliopsida</taxon>
        <taxon>Liliales</taxon>
        <taxon>Liliaceae</taxon>
        <taxon>Fritillaria</taxon>
    </lineage>
</organism>
<feature type="chain" id="PRO_0000111490" description="Small ribosomal subunit protein uS9">
    <location>
        <begin position="1"/>
        <end position="145"/>
    </location>
</feature>
<name>RS16_FRIAG</name>